<dbReference type="EC" id="2.7.4.3" evidence="1"/>
<dbReference type="EMBL" id="BA000033">
    <property type="protein sequence ID" value="BAB96013.1"/>
    <property type="molecule type" value="Genomic_DNA"/>
</dbReference>
<dbReference type="RefSeq" id="WP_001021468.1">
    <property type="nucleotide sequence ID" value="NC_003923.1"/>
</dbReference>
<dbReference type="SMR" id="P65202"/>
<dbReference type="KEGG" id="sam:MW2148"/>
<dbReference type="HOGENOM" id="CLU_032354_1_2_9"/>
<dbReference type="UniPathway" id="UPA00588">
    <property type="reaction ID" value="UER00649"/>
</dbReference>
<dbReference type="GO" id="GO:0005737">
    <property type="term" value="C:cytoplasm"/>
    <property type="evidence" value="ECO:0007669"/>
    <property type="project" value="UniProtKB-SubCell"/>
</dbReference>
<dbReference type="GO" id="GO:0004017">
    <property type="term" value="F:adenylate kinase activity"/>
    <property type="evidence" value="ECO:0007669"/>
    <property type="project" value="UniProtKB-UniRule"/>
</dbReference>
<dbReference type="GO" id="GO:0005524">
    <property type="term" value="F:ATP binding"/>
    <property type="evidence" value="ECO:0007669"/>
    <property type="project" value="UniProtKB-UniRule"/>
</dbReference>
<dbReference type="GO" id="GO:0008270">
    <property type="term" value="F:zinc ion binding"/>
    <property type="evidence" value="ECO:0007669"/>
    <property type="project" value="UniProtKB-UniRule"/>
</dbReference>
<dbReference type="GO" id="GO:0044209">
    <property type="term" value="P:AMP salvage"/>
    <property type="evidence" value="ECO:0007669"/>
    <property type="project" value="UniProtKB-UniRule"/>
</dbReference>
<dbReference type="CDD" id="cd01428">
    <property type="entry name" value="ADK"/>
    <property type="match status" value="1"/>
</dbReference>
<dbReference type="FunFam" id="3.40.50.300:FF:000106">
    <property type="entry name" value="Adenylate kinase mitochondrial"/>
    <property type="match status" value="1"/>
</dbReference>
<dbReference type="Gene3D" id="3.40.50.300">
    <property type="entry name" value="P-loop containing nucleotide triphosphate hydrolases"/>
    <property type="match status" value="1"/>
</dbReference>
<dbReference type="HAMAP" id="MF_00235">
    <property type="entry name" value="Adenylate_kinase_Adk"/>
    <property type="match status" value="1"/>
</dbReference>
<dbReference type="InterPro" id="IPR006259">
    <property type="entry name" value="Adenyl_kin_sub"/>
</dbReference>
<dbReference type="InterPro" id="IPR000850">
    <property type="entry name" value="Adenylat/UMP-CMP_kin"/>
</dbReference>
<dbReference type="InterPro" id="IPR033690">
    <property type="entry name" value="Adenylat_kinase_CS"/>
</dbReference>
<dbReference type="InterPro" id="IPR007862">
    <property type="entry name" value="Adenylate_kinase_lid-dom"/>
</dbReference>
<dbReference type="InterPro" id="IPR008144">
    <property type="entry name" value="Guanylate_kin-like_dom"/>
</dbReference>
<dbReference type="InterPro" id="IPR027417">
    <property type="entry name" value="P-loop_NTPase"/>
</dbReference>
<dbReference type="NCBIfam" id="TIGR01351">
    <property type="entry name" value="adk"/>
    <property type="match status" value="1"/>
</dbReference>
<dbReference type="NCBIfam" id="NF001380">
    <property type="entry name" value="PRK00279.1-2"/>
    <property type="match status" value="1"/>
</dbReference>
<dbReference type="NCBIfam" id="NF001381">
    <property type="entry name" value="PRK00279.1-3"/>
    <property type="match status" value="1"/>
</dbReference>
<dbReference type="NCBIfam" id="NF011100">
    <property type="entry name" value="PRK14527.1"/>
    <property type="match status" value="1"/>
</dbReference>
<dbReference type="PANTHER" id="PTHR23359">
    <property type="entry name" value="NUCLEOTIDE KINASE"/>
    <property type="match status" value="1"/>
</dbReference>
<dbReference type="Pfam" id="PF00406">
    <property type="entry name" value="ADK"/>
    <property type="match status" value="1"/>
</dbReference>
<dbReference type="Pfam" id="PF05191">
    <property type="entry name" value="ADK_lid"/>
    <property type="match status" value="1"/>
</dbReference>
<dbReference type="PRINTS" id="PR00094">
    <property type="entry name" value="ADENYLTKNASE"/>
</dbReference>
<dbReference type="SUPFAM" id="SSF52540">
    <property type="entry name" value="P-loop containing nucleoside triphosphate hydrolases"/>
    <property type="match status" value="1"/>
</dbReference>
<dbReference type="PROSITE" id="PS00113">
    <property type="entry name" value="ADENYLATE_KINASE"/>
    <property type="match status" value="1"/>
</dbReference>
<evidence type="ECO:0000255" key="1">
    <source>
        <dbReference type="HAMAP-Rule" id="MF_00235"/>
    </source>
</evidence>
<name>KAD_STAAW</name>
<sequence length="215" mass="23974">MNIILMGLPGAGKGTQASEIVKKFPIPHISTGDMFRKAIKEETELGKEAKSYMDRGELVPDEVTVGIVKERISEDDAKKGFLLDGFPRTIEQAEALNNIMSELDRNIDAVINIEVPEEELMNRLTGRRICESCGTTYHLVFNPPKVEGICDIDGGKLYQREDDNPETVANRLSVNIKQSKPILDFYDQKGVLKNIDGSKDISDVTKDVIDILDHL</sequence>
<organism>
    <name type="scientific">Staphylococcus aureus (strain MW2)</name>
    <dbReference type="NCBI Taxonomy" id="196620"/>
    <lineage>
        <taxon>Bacteria</taxon>
        <taxon>Bacillati</taxon>
        <taxon>Bacillota</taxon>
        <taxon>Bacilli</taxon>
        <taxon>Bacillales</taxon>
        <taxon>Staphylococcaceae</taxon>
        <taxon>Staphylococcus</taxon>
    </lineage>
</organism>
<keyword id="KW-0067">ATP-binding</keyword>
<keyword id="KW-0963">Cytoplasm</keyword>
<keyword id="KW-0418">Kinase</keyword>
<keyword id="KW-0479">Metal-binding</keyword>
<keyword id="KW-0545">Nucleotide biosynthesis</keyword>
<keyword id="KW-0547">Nucleotide-binding</keyword>
<keyword id="KW-0808">Transferase</keyword>
<keyword id="KW-0862">Zinc</keyword>
<reference key="1">
    <citation type="journal article" date="2002" name="Lancet">
        <title>Genome and virulence determinants of high virulence community-acquired MRSA.</title>
        <authorList>
            <person name="Baba T."/>
            <person name="Takeuchi F."/>
            <person name="Kuroda M."/>
            <person name="Yuzawa H."/>
            <person name="Aoki K."/>
            <person name="Oguchi A."/>
            <person name="Nagai Y."/>
            <person name="Iwama N."/>
            <person name="Asano K."/>
            <person name="Naimi T."/>
            <person name="Kuroda H."/>
            <person name="Cui L."/>
            <person name="Yamamoto K."/>
            <person name="Hiramatsu K."/>
        </authorList>
    </citation>
    <scope>NUCLEOTIDE SEQUENCE [LARGE SCALE GENOMIC DNA]</scope>
    <source>
        <strain>MW2</strain>
    </source>
</reference>
<protein>
    <recommendedName>
        <fullName evidence="1">Adenylate kinase</fullName>
        <shortName evidence="1">AK</shortName>
        <ecNumber evidence="1">2.7.4.3</ecNumber>
    </recommendedName>
    <alternativeName>
        <fullName evidence="1">ATP-AMP transphosphorylase</fullName>
    </alternativeName>
    <alternativeName>
        <fullName evidence="1">ATP:AMP phosphotransferase</fullName>
    </alternativeName>
    <alternativeName>
        <fullName evidence="1">Adenylate monophosphate kinase</fullName>
    </alternativeName>
</protein>
<accession>P65202</accession>
<accession>Q99S40</accession>
<feature type="chain" id="PRO_0000158849" description="Adenylate kinase">
    <location>
        <begin position="1"/>
        <end position="215"/>
    </location>
</feature>
<feature type="region of interest" description="NMP" evidence="1">
    <location>
        <begin position="30"/>
        <end position="59"/>
    </location>
</feature>
<feature type="region of interest" description="LID" evidence="1">
    <location>
        <begin position="126"/>
        <end position="163"/>
    </location>
</feature>
<feature type="binding site" evidence="1">
    <location>
        <begin position="10"/>
        <end position="15"/>
    </location>
    <ligand>
        <name>ATP</name>
        <dbReference type="ChEBI" id="CHEBI:30616"/>
    </ligand>
</feature>
<feature type="binding site" evidence="1">
    <location>
        <position position="31"/>
    </location>
    <ligand>
        <name>AMP</name>
        <dbReference type="ChEBI" id="CHEBI:456215"/>
    </ligand>
</feature>
<feature type="binding site" evidence="1">
    <location>
        <position position="36"/>
    </location>
    <ligand>
        <name>AMP</name>
        <dbReference type="ChEBI" id="CHEBI:456215"/>
    </ligand>
</feature>
<feature type="binding site" evidence="1">
    <location>
        <begin position="57"/>
        <end position="59"/>
    </location>
    <ligand>
        <name>AMP</name>
        <dbReference type="ChEBI" id="CHEBI:456215"/>
    </ligand>
</feature>
<feature type="binding site" evidence="1">
    <location>
        <begin position="85"/>
        <end position="88"/>
    </location>
    <ligand>
        <name>AMP</name>
        <dbReference type="ChEBI" id="CHEBI:456215"/>
    </ligand>
</feature>
<feature type="binding site" evidence="1">
    <location>
        <position position="92"/>
    </location>
    <ligand>
        <name>AMP</name>
        <dbReference type="ChEBI" id="CHEBI:456215"/>
    </ligand>
</feature>
<feature type="binding site" evidence="1">
    <location>
        <position position="127"/>
    </location>
    <ligand>
        <name>ATP</name>
        <dbReference type="ChEBI" id="CHEBI:30616"/>
    </ligand>
</feature>
<feature type="binding site" evidence="1">
    <location>
        <position position="130"/>
    </location>
    <ligand>
        <name>Zn(2+)</name>
        <dbReference type="ChEBI" id="CHEBI:29105"/>
        <note>structural</note>
    </ligand>
</feature>
<feature type="binding site" evidence="1">
    <location>
        <position position="133"/>
    </location>
    <ligand>
        <name>Zn(2+)</name>
        <dbReference type="ChEBI" id="CHEBI:29105"/>
        <note>structural</note>
    </ligand>
</feature>
<feature type="binding site" evidence="1">
    <location>
        <begin position="136"/>
        <end position="137"/>
    </location>
    <ligand>
        <name>ATP</name>
        <dbReference type="ChEBI" id="CHEBI:30616"/>
    </ligand>
</feature>
<feature type="binding site" evidence="1">
    <location>
        <position position="150"/>
    </location>
    <ligand>
        <name>Zn(2+)</name>
        <dbReference type="ChEBI" id="CHEBI:29105"/>
        <note>structural</note>
    </ligand>
</feature>
<feature type="binding site" evidence="1">
    <location>
        <position position="153"/>
    </location>
    <ligand>
        <name>Zn(2+)</name>
        <dbReference type="ChEBI" id="CHEBI:29105"/>
        <note>structural</note>
    </ligand>
</feature>
<feature type="binding site" evidence="1">
    <location>
        <position position="160"/>
    </location>
    <ligand>
        <name>AMP</name>
        <dbReference type="ChEBI" id="CHEBI:456215"/>
    </ligand>
</feature>
<feature type="binding site" evidence="1">
    <location>
        <position position="171"/>
    </location>
    <ligand>
        <name>AMP</name>
        <dbReference type="ChEBI" id="CHEBI:456215"/>
    </ligand>
</feature>
<feature type="binding site" evidence="1">
    <location>
        <position position="199"/>
    </location>
    <ligand>
        <name>ATP</name>
        <dbReference type="ChEBI" id="CHEBI:30616"/>
    </ligand>
</feature>
<proteinExistence type="inferred from homology"/>
<comment type="function">
    <text evidence="1">Catalyzes the reversible transfer of the terminal phosphate group between ATP and AMP. Plays an important role in cellular energy homeostasis and in adenine nucleotide metabolism.</text>
</comment>
<comment type="catalytic activity">
    <reaction evidence="1">
        <text>AMP + ATP = 2 ADP</text>
        <dbReference type="Rhea" id="RHEA:12973"/>
        <dbReference type="ChEBI" id="CHEBI:30616"/>
        <dbReference type="ChEBI" id="CHEBI:456215"/>
        <dbReference type="ChEBI" id="CHEBI:456216"/>
        <dbReference type="EC" id="2.7.4.3"/>
    </reaction>
</comment>
<comment type="pathway">
    <text evidence="1">Purine metabolism; AMP biosynthesis via salvage pathway; AMP from ADP: step 1/1.</text>
</comment>
<comment type="subunit">
    <text evidence="1">Monomer.</text>
</comment>
<comment type="subcellular location">
    <subcellularLocation>
        <location evidence="1">Cytoplasm</location>
    </subcellularLocation>
</comment>
<comment type="domain">
    <text evidence="1">Consists of three domains, a large central CORE domain and two small peripheral domains, NMPbind and LID, which undergo movements during catalysis. The LID domain closes over the site of phosphoryl transfer upon ATP binding. Assembling and dissambling the active center during each catalytic cycle provides an effective means to prevent ATP hydrolysis. Some bacteria have evolved a zinc-coordinating structure that stabilizes the LID domain.</text>
</comment>
<comment type="similarity">
    <text evidence="1">Belongs to the adenylate kinase family.</text>
</comment>
<gene>
    <name evidence="1" type="primary">adk</name>
    <name type="ordered locus">MW2148</name>
</gene>